<feature type="chain" id="PRO_0000173782" description="Formimidoylglutamase">
    <location>
        <begin position="1"/>
        <end position="336"/>
    </location>
</feature>
<feature type="binding site" evidence="1">
    <location>
        <position position="129"/>
    </location>
    <ligand>
        <name>Mn(2+)</name>
        <dbReference type="ChEBI" id="CHEBI:29035"/>
        <label>1</label>
    </ligand>
</feature>
<feature type="binding site" evidence="1">
    <location>
        <position position="160"/>
    </location>
    <ligand>
        <name>Mn(2+)</name>
        <dbReference type="ChEBI" id="CHEBI:29035"/>
        <label>1</label>
    </ligand>
</feature>
<feature type="binding site" evidence="1">
    <location>
        <position position="160"/>
    </location>
    <ligand>
        <name>Mn(2+)</name>
        <dbReference type="ChEBI" id="CHEBI:29035"/>
        <label>2</label>
    </ligand>
</feature>
<feature type="binding site" evidence="1">
    <location>
        <position position="162"/>
    </location>
    <ligand>
        <name>Mn(2+)</name>
        <dbReference type="ChEBI" id="CHEBI:29035"/>
        <label>2</label>
    </ligand>
</feature>
<feature type="binding site" evidence="1">
    <location>
        <position position="164"/>
    </location>
    <ligand>
        <name>Mn(2+)</name>
        <dbReference type="ChEBI" id="CHEBI:29035"/>
        <label>1</label>
    </ligand>
</feature>
<feature type="binding site" evidence="1">
    <location>
        <position position="257"/>
    </location>
    <ligand>
        <name>Mn(2+)</name>
        <dbReference type="ChEBI" id="CHEBI:29035"/>
        <label>1</label>
    </ligand>
</feature>
<feature type="binding site" evidence="1">
    <location>
        <position position="257"/>
    </location>
    <ligand>
        <name>Mn(2+)</name>
        <dbReference type="ChEBI" id="CHEBI:29035"/>
        <label>2</label>
    </ligand>
</feature>
<feature type="binding site" evidence="1">
    <location>
        <position position="259"/>
    </location>
    <ligand>
        <name>Mn(2+)</name>
        <dbReference type="ChEBI" id="CHEBI:29035"/>
        <label>2</label>
    </ligand>
</feature>
<evidence type="ECO:0000255" key="1">
    <source>
        <dbReference type="HAMAP-Rule" id="MF_00737"/>
    </source>
</evidence>
<evidence type="ECO:0000305" key="2"/>
<name>HUTG_VIBVY</name>
<reference key="1">
    <citation type="journal article" date="2003" name="Genome Res.">
        <title>Comparative genome analysis of Vibrio vulnificus, a marine pathogen.</title>
        <authorList>
            <person name="Chen C.-Y."/>
            <person name="Wu K.-M."/>
            <person name="Chang Y.-C."/>
            <person name="Chang C.-H."/>
            <person name="Tsai H.-C."/>
            <person name="Liao T.-L."/>
            <person name="Liu Y.-M."/>
            <person name="Chen H.-J."/>
            <person name="Shen A.B.-T."/>
            <person name="Li J.-C."/>
            <person name="Su T.-L."/>
            <person name="Shao C.-P."/>
            <person name="Lee C.-T."/>
            <person name="Hor L.-I."/>
            <person name="Tsai S.-F."/>
        </authorList>
    </citation>
    <scope>NUCLEOTIDE SEQUENCE [LARGE SCALE GENOMIC DNA]</scope>
    <source>
        <strain>YJ016</strain>
    </source>
</reference>
<accession>P60111</accession>
<accession>Q7MK60</accession>
<dbReference type="EC" id="3.5.3.8" evidence="1"/>
<dbReference type="EMBL" id="BA000037">
    <property type="protein sequence ID" value="BAC94714.1"/>
    <property type="status" value="ALT_INIT"/>
    <property type="molecule type" value="Genomic_DNA"/>
</dbReference>
<dbReference type="RefSeq" id="WP_043877215.1">
    <property type="nucleotide sequence ID" value="NC_005139.1"/>
</dbReference>
<dbReference type="SMR" id="P60111"/>
<dbReference type="STRING" id="672.VV93_v1c17100"/>
<dbReference type="KEGG" id="vvy:VV1950"/>
<dbReference type="PATRIC" id="fig|196600.6.peg.1978"/>
<dbReference type="eggNOG" id="COG0010">
    <property type="taxonomic scope" value="Bacteria"/>
</dbReference>
<dbReference type="HOGENOM" id="CLU_039478_2_0_6"/>
<dbReference type="UniPathway" id="UPA00379">
    <property type="reaction ID" value="UER00552"/>
</dbReference>
<dbReference type="Proteomes" id="UP000002675">
    <property type="component" value="Chromosome I"/>
</dbReference>
<dbReference type="GO" id="GO:0008783">
    <property type="term" value="F:agmatinase activity"/>
    <property type="evidence" value="ECO:0007669"/>
    <property type="project" value="TreeGrafter"/>
</dbReference>
<dbReference type="GO" id="GO:0050415">
    <property type="term" value="F:formimidoylglutamase activity"/>
    <property type="evidence" value="ECO:0007669"/>
    <property type="project" value="UniProtKB-UniRule"/>
</dbReference>
<dbReference type="GO" id="GO:0030145">
    <property type="term" value="F:manganese ion binding"/>
    <property type="evidence" value="ECO:0007669"/>
    <property type="project" value="UniProtKB-UniRule"/>
</dbReference>
<dbReference type="GO" id="GO:0019556">
    <property type="term" value="P:L-histidine catabolic process to glutamate and formamide"/>
    <property type="evidence" value="ECO:0007669"/>
    <property type="project" value="UniProtKB-UniPathway"/>
</dbReference>
<dbReference type="GO" id="GO:0019557">
    <property type="term" value="P:L-histidine catabolic process to glutamate and formate"/>
    <property type="evidence" value="ECO:0007669"/>
    <property type="project" value="UniProtKB-UniPathway"/>
</dbReference>
<dbReference type="GO" id="GO:0033389">
    <property type="term" value="P:putrescine biosynthetic process from arginine, via agmatine"/>
    <property type="evidence" value="ECO:0007669"/>
    <property type="project" value="TreeGrafter"/>
</dbReference>
<dbReference type="CDD" id="cd09988">
    <property type="entry name" value="Formimidoylglutamase"/>
    <property type="match status" value="1"/>
</dbReference>
<dbReference type="Gene3D" id="3.40.800.10">
    <property type="entry name" value="Ureohydrolase domain"/>
    <property type="match status" value="1"/>
</dbReference>
<dbReference type="HAMAP" id="MF_00737">
    <property type="entry name" value="Formimidoylglutam"/>
    <property type="match status" value="1"/>
</dbReference>
<dbReference type="InterPro" id="IPR005923">
    <property type="entry name" value="HutG"/>
</dbReference>
<dbReference type="InterPro" id="IPR006035">
    <property type="entry name" value="Ureohydrolase"/>
</dbReference>
<dbReference type="InterPro" id="IPR023696">
    <property type="entry name" value="Ureohydrolase_dom_sf"/>
</dbReference>
<dbReference type="InterPro" id="IPR020855">
    <property type="entry name" value="Ureohydrolase_Mn_BS"/>
</dbReference>
<dbReference type="NCBIfam" id="TIGR01227">
    <property type="entry name" value="hutG"/>
    <property type="match status" value="1"/>
</dbReference>
<dbReference type="PANTHER" id="PTHR11358">
    <property type="entry name" value="ARGINASE/AGMATINASE"/>
    <property type="match status" value="1"/>
</dbReference>
<dbReference type="PANTHER" id="PTHR11358:SF35">
    <property type="entry name" value="FORMIMIDOYLGLUTAMASE"/>
    <property type="match status" value="1"/>
</dbReference>
<dbReference type="Pfam" id="PF00491">
    <property type="entry name" value="Arginase"/>
    <property type="match status" value="1"/>
</dbReference>
<dbReference type="PIRSF" id="PIRSF036979">
    <property type="entry name" value="Arginase"/>
    <property type="match status" value="1"/>
</dbReference>
<dbReference type="PRINTS" id="PR00116">
    <property type="entry name" value="ARGINASE"/>
</dbReference>
<dbReference type="SUPFAM" id="SSF52768">
    <property type="entry name" value="Arginase/deacetylase"/>
    <property type="match status" value="1"/>
</dbReference>
<dbReference type="PROSITE" id="PS01053">
    <property type="entry name" value="ARGINASE_1"/>
    <property type="match status" value="1"/>
</dbReference>
<dbReference type="PROSITE" id="PS51409">
    <property type="entry name" value="ARGINASE_2"/>
    <property type="match status" value="1"/>
</dbReference>
<proteinExistence type="inferred from homology"/>
<sequence>MSKHFFLHNEFHWQGRHDAEDGAAGSRVHHVVQQIDYTHIGENPYGVALLGFACDAGVARNKGRIGAKKSPDLIRRALANLAWHSPHPLYDLGTVVCDDDLLESSQQHCAKIIAEVLPCVPVITLGGGHEVAWASFSGLARYFEQHHPEKAPKIGIINFDAHFDLRAFSSSQADVKPSSGTPFNQIQHYCQQQGWDFHYACLGVSKASNTRALFERAEQLNVWFVEDKDLGSVNHDYHLTQLQHFIDDCDYLYLTIDLDVFPAATAPGVSAPAARGVSYDNLAPFLDRILAHRDKLMLADIAEYNPTYDVDSQTARLAARLCWDIANAMNDKLEHQ</sequence>
<gene>
    <name evidence="1" type="primary">hutG</name>
    <name type="ordered locus">VV1950</name>
</gene>
<keyword id="KW-0369">Histidine metabolism</keyword>
<keyword id="KW-0378">Hydrolase</keyword>
<keyword id="KW-0464">Manganese</keyword>
<keyword id="KW-0479">Metal-binding</keyword>
<comment type="function">
    <text evidence="1">Catalyzes the conversion of N-formimidoyl-L-glutamate to L-glutamate and formamide.</text>
</comment>
<comment type="catalytic activity">
    <reaction evidence="1">
        <text>N-formimidoyl-L-glutamate + H2O = formamide + L-glutamate</text>
        <dbReference type="Rhea" id="RHEA:22492"/>
        <dbReference type="ChEBI" id="CHEBI:15377"/>
        <dbReference type="ChEBI" id="CHEBI:16397"/>
        <dbReference type="ChEBI" id="CHEBI:29985"/>
        <dbReference type="ChEBI" id="CHEBI:58928"/>
        <dbReference type="EC" id="3.5.3.8"/>
    </reaction>
</comment>
<comment type="cofactor">
    <cofactor evidence="1">
        <name>Mn(2+)</name>
        <dbReference type="ChEBI" id="CHEBI:29035"/>
    </cofactor>
    <text evidence="1">Binds 2 manganese ions per subunit.</text>
</comment>
<comment type="pathway">
    <text evidence="1">Amino-acid degradation; L-histidine degradation into L-glutamate; L-glutamate from N-formimidoyl-L-glutamate (hydrolase route): step 1/1.</text>
</comment>
<comment type="similarity">
    <text evidence="1">Belongs to the arginase family.</text>
</comment>
<comment type="sequence caution" evidence="2">
    <conflict type="erroneous initiation">
        <sequence resource="EMBL-CDS" id="BAC94714"/>
    </conflict>
</comment>
<protein>
    <recommendedName>
        <fullName evidence="1">Formimidoylglutamase</fullName>
        <ecNumber evidence="1">3.5.3.8</ecNumber>
    </recommendedName>
    <alternativeName>
        <fullName evidence="1">Formiminoglutamase</fullName>
    </alternativeName>
    <alternativeName>
        <fullName evidence="1">Formiminoglutamate hydrolase</fullName>
    </alternativeName>
</protein>
<organism>
    <name type="scientific">Vibrio vulnificus (strain YJ016)</name>
    <dbReference type="NCBI Taxonomy" id="196600"/>
    <lineage>
        <taxon>Bacteria</taxon>
        <taxon>Pseudomonadati</taxon>
        <taxon>Pseudomonadota</taxon>
        <taxon>Gammaproteobacteria</taxon>
        <taxon>Vibrionales</taxon>
        <taxon>Vibrionaceae</taxon>
        <taxon>Vibrio</taxon>
    </lineage>
</organism>